<accession>Q8XA45</accession>
<accession>Q7ABK4</accession>
<evidence type="ECO:0000255" key="1">
    <source>
        <dbReference type="HAMAP-Rule" id="MF_02016"/>
    </source>
</evidence>
<evidence type="ECO:0000305" key="2"/>
<protein>
    <recommendedName>
        <fullName evidence="1">Membrane-bound lytic murein transglycosylase F</fullName>
        <ecNumber evidence="1">4.2.2.n1</ecNumber>
    </recommendedName>
    <alternativeName>
        <fullName evidence="1">Murein lyase F</fullName>
    </alternativeName>
</protein>
<feature type="signal peptide" evidence="1">
    <location>
        <begin position="1"/>
        <end position="21"/>
    </location>
</feature>
<feature type="chain" id="PRO_0000353928" description="Membrane-bound lytic murein transglycosylase F">
    <location>
        <begin position="22"/>
        <end position="518"/>
    </location>
</feature>
<feature type="region of interest" description="Non-LT domain" evidence="1">
    <location>
        <begin position="22"/>
        <end position="269"/>
    </location>
</feature>
<feature type="region of interest" description="LT domain" evidence="1">
    <location>
        <begin position="270"/>
        <end position="518"/>
    </location>
</feature>
<feature type="active site" evidence="1">
    <location>
        <position position="314"/>
    </location>
</feature>
<sequence length="518" mass="58317">MKKLKINYLFIGILALLLAVALWPSIPWFGKADNRIAAIQARGELRVSTIHTPLTYNEINGKPFGLDYELAKQFADYLGVKLKVTVRQNISQLFDDLDNGNADLLAAGLVYNSERVKNYQPGPTYYSVSQQLVYKVGQYRPRTLGNLTAEQLTVAPGHVVVNDLQTLKETKFPELSWKVDDKKGSAELMEDVIEGKLDYTIADSVAISLFQRVHPELAVALDITDEQPVTWFSPLDGDNTLSAALLDFFNEMNEDGTLARIEEKYLGHGDDFDYVDTRTFLRAVDAVLPQLKPLFEKYAEEIDWRLLAAIAYQESHWDAQATSPTGVRGMMMLTKNTAQSLGITDRTDAEQSISGGVRYLQDMMSKVPESVPENERIWFALAAYNMGYAHMQDARALTAKTKGNPDSWADVKQRLPLLSQKPYYSKLTYGYARGHEAYAYVENIRKYQISLVGYLQEKEKQATEAAMQLAQDYPAVSPTELGKEKFPFLSFLSQSSSNYLTHSPSLLFSRKGSEEKQN</sequence>
<reference key="1">
    <citation type="journal article" date="2001" name="Nature">
        <title>Genome sequence of enterohaemorrhagic Escherichia coli O157:H7.</title>
        <authorList>
            <person name="Perna N.T."/>
            <person name="Plunkett G. III"/>
            <person name="Burland V."/>
            <person name="Mau B."/>
            <person name="Glasner J.D."/>
            <person name="Rose D.J."/>
            <person name="Mayhew G.F."/>
            <person name="Evans P.S."/>
            <person name="Gregor J."/>
            <person name="Kirkpatrick H.A."/>
            <person name="Posfai G."/>
            <person name="Hackett J."/>
            <person name="Klink S."/>
            <person name="Boutin A."/>
            <person name="Shao Y."/>
            <person name="Miller L."/>
            <person name="Grotbeck E.J."/>
            <person name="Davis N.W."/>
            <person name="Lim A."/>
            <person name="Dimalanta E.T."/>
            <person name="Potamousis K."/>
            <person name="Apodaca J."/>
            <person name="Anantharaman T.S."/>
            <person name="Lin J."/>
            <person name="Yen G."/>
            <person name="Schwartz D.C."/>
            <person name="Welch R.A."/>
            <person name="Blattner F.R."/>
        </authorList>
    </citation>
    <scope>NUCLEOTIDE SEQUENCE [LARGE SCALE GENOMIC DNA]</scope>
    <source>
        <strain>O157:H7 / EDL933 / ATCC 700927 / EHEC</strain>
    </source>
</reference>
<reference key="2">
    <citation type="journal article" date="2001" name="DNA Res.">
        <title>Complete genome sequence of enterohemorrhagic Escherichia coli O157:H7 and genomic comparison with a laboratory strain K-12.</title>
        <authorList>
            <person name="Hayashi T."/>
            <person name="Makino K."/>
            <person name="Ohnishi M."/>
            <person name="Kurokawa K."/>
            <person name="Ishii K."/>
            <person name="Yokoyama K."/>
            <person name="Han C.-G."/>
            <person name="Ohtsubo E."/>
            <person name="Nakayama K."/>
            <person name="Murata T."/>
            <person name="Tanaka M."/>
            <person name="Tobe T."/>
            <person name="Iida T."/>
            <person name="Takami H."/>
            <person name="Honda T."/>
            <person name="Sasakawa C."/>
            <person name="Ogasawara N."/>
            <person name="Yasunaga T."/>
            <person name="Kuhara S."/>
            <person name="Shiba T."/>
            <person name="Hattori M."/>
            <person name="Shinagawa H."/>
        </authorList>
    </citation>
    <scope>NUCLEOTIDE SEQUENCE [LARGE SCALE GENOMIC DNA]</scope>
    <source>
        <strain>O157:H7 / Sakai / RIMD 0509952 / EHEC</strain>
    </source>
</reference>
<dbReference type="EC" id="4.2.2.n1" evidence="1"/>
<dbReference type="EMBL" id="AE005174">
    <property type="protein sequence ID" value="AAG57672.1"/>
    <property type="status" value="ALT_INIT"/>
    <property type="molecule type" value="Genomic_DNA"/>
</dbReference>
<dbReference type="EMBL" id="BA000007">
    <property type="protein sequence ID" value="BAB36847.2"/>
    <property type="molecule type" value="Genomic_DNA"/>
</dbReference>
<dbReference type="PIR" id="D85901">
    <property type="entry name" value="D85901"/>
</dbReference>
<dbReference type="PIR" id="H91056">
    <property type="entry name" value="H91056"/>
</dbReference>
<dbReference type="RefSeq" id="NP_311451.2">
    <property type="nucleotide sequence ID" value="NC_002695.1"/>
</dbReference>
<dbReference type="RefSeq" id="WP_000734215.1">
    <property type="nucleotide sequence ID" value="NZ_VOAI01000001.1"/>
</dbReference>
<dbReference type="SMR" id="Q8XA45"/>
<dbReference type="STRING" id="155864.Z3838"/>
<dbReference type="CAZy" id="GH23">
    <property type="family name" value="Glycoside Hydrolase Family 23"/>
</dbReference>
<dbReference type="GeneID" id="914913"/>
<dbReference type="KEGG" id="ece:Z3838"/>
<dbReference type="KEGG" id="ecs:ECs_3424"/>
<dbReference type="PATRIC" id="fig|386585.9.peg.3578"/>
<dbReference type="eggNOG" id="COG4623">
    <property type="taxonomic scope" value="Bacteria"/>
</dbReference>
<dbReference type="HOGENOM" id="CLU_027494_0_1_6"/>
<dbReference type="OMA" id="YYDILTW"/>
<dbReference type="Proteomes" id="UP000000558">
    <property type="component" value="Chromosome"/>
</dbReference>
<dbReference type="Proteomes" id="UP000002519">
    <property type="component" value="Chromosome"/>
</dbReference>
<dbReference type="GO" id="GO:0009279">
    <property type="term" value="C:cell outer membrane"/>
    <property type="evidence" value="ECO:0007669"/>
    <property type="project" value="UniProtKB-SubCell"/>
</dbReference>
<dbReference type="GO" id="GO:0008933">
    <property type="term" value="F:peptidoglycan lytic transglycosylase activity"/>
    <property type="evidence" value="ECO:0007669"/>
    <property type="project" value="UniProtKB-UniRule"/>
</dbReference>
<dbReference type="GO" id="GO:0016998">
    <property type="term" value="P:cell wall macromolecule catabolic process"/>
    <property type="evidence" value="ECO:0007669"/>
    <property type="project" value="UniProtKB-UniRule"/>
</dbReference>
<dbReference type="GO" id="GO:0071555">
    <property type="term" value="P:cell wall organization"/>
    <property type="evidence" value="ECO:0007669"/>
    <property type="project" value="UniProtKB-KW"/>
</dbReference>
<dbReference type="GO" id="GO:0009253">
    <property type="term" value="P:peptidoglycan catabolic process"/>
    <property type="evidence" value="ECO:0007669"/>
    <property type="project" value="TreeGrafter"/>
</dbReference>
<dbReference type="CDD" id="cd13403">
    <property type="entry name" value="MLTF-like"/>
    <property type="match status" value="1"/>
</dbReference>
<dbReference type="CDD" id="cd01009">
    <property type="entry name" value="PBP2_YfhD_N"/>
    <property type="match status" value="1"/>
</dbReference>
<dbReference type="FunFam" id="1.10.530.10:FF:000003">
    <property type="entry name" value="Membrane-bound lytic murein transglycosylase F"/>
    <property type="match status" value="1"/>
</dbReference>
<dbReference type="FunFam" id="3.40.190.10:FF:000051">
    <property type="entry name" value="Membrane-bound lytic murein transglycosylase F"/>
    <property type="match status" value="1"/>
</dbReference>
<dbReference type="Gene3D" id="1.10.530.10">
    <property type="match status" value="1"/>
</dbReference>
<dbReference type="Gene3D" id="3.40.190.10">
    <property type="entry name" value="Periplasmic binding protein-like II"/>
    <property type="match status" value="2"/>
</dbReference>
<dbReference type="HAMAP" id="MF_02016">
    <property type="entry name" value="MltF"/>
    <property type="match status" value="1"/>
</dbReference>
<dbReference type="InterPro" id="IPR023346">
    <property type="entry name" value="Lysozyme-like_dom_sf"/>
</dbReference>
<dbReference type="InterPro" id="IPR023703">
    <property type="entry name" value="MltF"/>
</dbReference>
<dbReference type="InterPro" id="IPR001638">
    <property type="entry name" value="Solute-binding_3/MltF_N"/>
</dbReference>
<dbReference type="InterPro" id="IPR000189">
    <property type="entry name" value="Transglyc_AS"/>
</dbReference>
<dbReference type="InterPro" id="IPR008258">
    <property type="entry name" value="Transglycosylase_SLT_dom_1"/>
</dbReference>
<dbReference type="NCBIfam" id="NF008112">
    <property type="entry name" value="PRK10859.1"/>
    <property type="match status" value="1"/>
</dbReference>
<dbReference type="PANTHER" id="PTHR35936">
    <property type="entry name" value="MEMBRANE-BOUND LYTIC MUREIN TRANSGLYCOSYLASE F"/>
    <property type="match status" value="1"/>
</dbReference>
<dbReference type="PANTHER" id="PTHR35936:SF32">
    <property type="entry name" value="MEMBRANE-BOUND LYTIC MUREIN TRANSGLYCOSYLASE F"/>
    <property type="match status" value="1"/>
</dbReference>
<dbReference type="Pfam" id="PF00497">
    <property type="entry name" value="SBP_bac_3"/>
    <property type="match status" value="1"/>
</dbReference>
<dbReference type="Pfam" id="PF01464">
    <property type="entry name" value="SLT"/>
    <property type="match status" value="1"/>
</dbReference>
<dbReference type="SMART" id="SM00062">
    <property type="entry name" value="PBPb"/>
    <property type="match status" value="1"/>
</dbReference>
<dbReference type="SUPFAM" id="SSF53955">
    <property type="entry name" value="Lysozyme-like"/>
    <property type="match status" value="1"/>
</dbReference>
<dbReference type="SUPFAM" id="SSF53850">
    <property type="entry name" value="Periplasmic binding protein-like II"/>
    <property type="match status" value="1"/>
</dbReference>
<dbReference type="PROSITE" id="PS00922">
    <property type="entry name" value="TRANSGLYCOSYLASE"/>
    <property type="match status" value="1"/>
</dbReference>
<gene>
    <name evidence="1" type="primary">mltF</name>
    <name type="ordered locus">Z3838</name>
    <name type="ordered locus">ECs3424</name>
</gene>
<proteinExistence type="inferred from homology"/>
<organism>
    <name type="scientific">Escherichia coli O157:H7</name>
    <dbReference type="NCBI Taxonomy" id="83334"/>
    <lineage>
        <taxon>Bacteria</taxon>
        <taxon>Pseudomonadati</taxon>
        <taxon>Pseudomonadota</taxon>
        <taxon>Gammaproteobacteria</taxon>
        <taxon>Enterobacterales</taxon>
        <taxon>Enterobacteriaceae</taxon>
        <taxon>Escherichia</taxon>
    </lineage>
</organism>
<comment type="function">
    <text evidence="1">Murein-degrading enzyme that degrades murein glycan strands and insoluble, high-molecular weight murein sacculi, with the concomitant formation of a 1,6-anhydromuramoyl product. Lytic transglycosylases (LTs) play an integral role in the metabolism of the peptidoglycan (PG) sacculus. Their lytic action creates space within the PG sacculus to allow for its expansion as well as for the insertion of various structures such as secretion systems and flagella.</text>
</comment>
<comment type="catalytic activity">
    <reaction evidence="1">
        <text>Exolytic cleavage of the (1-&gt;4)-beta-glycosidic linkage between N-acetylmuramic acid (MurNAc) and N-acetylglucosamine (GlcNAc) residues in peptidoglycan, from either the reducing or the non-reducing ends of the peptidoglycan chains, with concomitant formation of a 1,6-anhydrobond in the MurNAc residue.</text>
        <dbReference type="EC" id="4.2.2.n1"/>
    </reaction>
</comment>
<comment type="subcellular location">
    <subcellularLocation>
        <location>Cell outer membrane</location>
        <topology>Peripheral membrane protein</topology>
    </subcellularLocation>
    <text evidence="1">Attached to the inner leaflet of the outer membrane.</text>
</comment>
<comment type="domain">
    <text evidence="1">The N-terminal domain does not have lytic activity and probably modulates enzymatic activity. The C-terminal domain is the catalytic active domain.</text>
</comment>
<comment type="similarity">
    <text evidence="1">In the N-terminal section; belongs to the bacterial solute-binding protein 3 family.</text>
</comment>
<comment type="similarity">
    <text evidence="1">In the C-terminal section; belongs to the transglycosylase Slt family.</text>
</comment>
<comment type="sequence caution" evidence="2">
    <conflict type="erroneous initiation">
        <sequence resource="EMBL-CDS" id="AAG57672"/>
    </conflict>
    <text>Truncated N-terminus.</text>
</comment>
<name>MLTF_ECO57</name>
<keyword id="KW-0998">Cell outer membrane</keyword>
<keyword id="KW-0961">Cell wall biogenesis/degradation</keyword>
<keyword id="KW-0456">Lyase</keyword>
<keyword id="KW-0472">Membrane</keyword>
<keyword id="KW-1185">Reference proteome</keyword>
<keyword id="KW-0732">Signal</keyword>